<evidence type="ECO:0000269" key="1">
    <source>
    </source>
</evidence>
<evidence type="ECO:0000305" key="2"/>
<gene>
    <name type="primary">mcjB</name>
</gene>
<comment type="function">
    <text evidence="1">Along with McjC, necessary and sufficient to process the inactive microcin J25 (McjA) precursor into the active peptide.</text>
</comment>
<comment type="subcellular location">
    <subcellularLocation>
        <location evidence="2">Cytoplasm</location>
    </subcellularLocation>
</comment>
<dbReference type="EMBL" id="AF061787">
    <property type="protein sequence ID" value="AAD28495.1"/>
    <property type="molecule type" value="Genomic_DNA"/>
</dbReference>
<dbReference type="RefSeq" id="WP_001513515.1">
    <property type="nucleotide sequence ID" value="NZ_WVVR01000053.1"/>
</dbReference>
<dbReference type="MEROPS" id="C96.001"/>
<dbReference type="GO" id="GO:0005737">
    <property type="term" value="C:cytoplasm"/>
    <property type="evidence" value="ECO:0007669"/>
    <property type="project" value="UniProtKB-SubCell"/>
</dbReference>
<dbReference type="GO" id="GO:0017000">
    <property type="term" value="P:antibiotic biosynthetic process"/>
    <property type="evidence" value="ECO:0007669"/>
    <property type="project" value="UniProtKB-KW"/>
</dbReference>
<dbReference type="InterPro" id="IPR053521">
    <property type="entry name" value="McjB-like"/>
</dbReference>
<dbReference type="InterPro" id="IPR032708">
    <property type="entry name" value="McjB_C"/>
</dbReference>
<dbReference type="NCBIfam" id="NF033537">
    <property type="entry name" value="lasso_biosyn_B2"/>
    <property type="match status" value="1"/>
</dbReference>
<dbReference type="Pfam" id="PF13471">
    <property type="entry name" value="Transglut_core3"/>
    <property type="match status" value="1"/>
</dbReference>
<organism>
    <name type="scientific">Escherichia coli</name>
    <dbReference type="NCBI Taxonomy" id="562"/>
    <lineage>
        <taxon>Bacteria</taxon>
        <taxon>Pseudomonadati</taxon>
        <taxon>Pseudomonadota</taxon>
        <taxon>Gammaproteobacteria</taxon>
        <taxon>Enterobacterales</taxon>
        <taxon>Enterobacteriaceae</taxon>
        <taxon>Escherichia</taxon>
    </lineage>
</organism>
<geneLocation type="plasmid">
    <name>pTUC100</name>
</geneLocation>
<feature type="chain" id="PRO_0000068576" description="Microcin J25-processing protein McjB">
    <location>
        <begin position="1"/>
        <end position="208"/>
    </location>
</feature>
<keyword id="KW-0045">Antibiotic biosynthesis</keyword>
<keyword id="KW-0963">Cytoplasm</keyword>
<keyword id="KW-0614">Plasmid</keyword>
<protein>
    <recommendedName>
        <fullName>Microcin J25-processing protein McjB</fullName>
    </recommendedName>
</protein>
<reference key="1">
    <citation type="journal article" date="1999" name="J. Bacteriol.">
        <title>Sequence analysis of the four plasmid genes required to produce the circular peptide antibiotic microcin J25.</title>
        <authorList>
            <person name="Solbiati J.O."/>
            <person name="Ciaccio M."/>
            <person name="Farias R.N."/>
            <person name="Gonzalez-Pastor J.E."/>
            <person name="Moreno F."/>
            <person name="Salomon R.A."/>
        </authorList>
    </citation>
    <scope>NUCLEOTIDE SEQUENCE [GENOMIC DNA]</scope>
    <scope>FUNCTION</scope>
    <source>
        <strain>AY25</strain>
    </source>
</reference>
<accession>Q9X2V8</accession>
<sequence length="208" mass="24568">MIRYCLTSYREDLVILDIINDSFSIVPDAGSLLKERDKLLKEFPQLSYFFDSEYHIGSVSRNSDTSFLEERWFLPEPDKTLYKCSLFKRFILLLKVFYYSWNIEKKGMAWIFISNKKENRLYSLNEEHLIRKEISNLSIIFHLNIFKSDCLTYSYALKRILNSRNIDAHLVIGVRTQPFYSHSWVEVGGQVINDAPNMRDKLSVIAEI</sequence>
<name>MCJB_ECOLX</name>
<proteinExistence type="predicted"/>